<sequence length="655" mass="73007">MARKQQFDYNEDAIQVLEGLEAVRKRPGMYIGSTDARGLHHLVYEIVDNSVDEVLAGHGDHIIVKIHKDNSISVQDRGRGMPTGMHKLGKPTPEVILTVLHAGGKFGQGGYKTSGGLHGVGASVVNALSEWLTVTIERDGFVYQQRFENGGKPVTSLEKIGKTKKTGTLTHFKPDPTMFSTTTYNFETLSERLRESAFLLKGLKIELIDERNDQREVFYYENGIEAFVAYLNEEKDVLSEVVSFEGEHHSIEVDFAFQFNDGYSENILSFVNNVRTKDGGTHESGAKTAMTRAFNEYARKVALLKEKDKNLEGTDIREGLSAIISVRIPEELLQFEGQTKGKLGTSEARSAVDAIVSEQLAYFLEENRDTATLLVKKAIKASQAREAARKAREEARSGKKRKKSEATLSGKLTPAGSRNPAKNELYLVEGDSAGGSAKQGRDRRFQAVLPLRGKVINTEKAKLADIFKNEEINTIIHAIGGGVGADFSIDDINYDKIIIMTDADTDGAHIQVLLLTFFYRYMKPLIEHGKVFIALPPLYKVSKGSGKKEIIEYAWSDEEMGDVLKKVGKGYTIQRYKGLGEMNADQLWETTMNPESRTLVRVKIDDAARVERRVTTLMGDKVEPRRKWIEKNVAFGLDEESNILENENLSVAEEV</sequence>
<accession>Q59192</accession>
<proteinExistence type="inferred from homology"/>
<keyword id="KW-0067">ATP-binding</keyword>
<keyword id="KW-0238">DNA-binding</keyword>
<keyword id="KW-0413">Isomerase</keyword>
<keyword id="KW-0460">Magnesium</keyword>
<keyword id="KW-0479">Metal-binding</keyword>
<keyword id="KW-0547">Nucleotide-binding</keyword>
<keyword id="KW-1185">Reference proteome</keyword>
<keyword id="KW-0799">Topoisomerase</keyword>
<evidence type="ECO:0000255" key="1">
    <source>
        <dbReference type="HAMAP-Rule" id="MF_00939"/>
    </source>
</evidence>
<evidence type="ECO:0000256" key="2">
    <source>
        <dbReference type="SAM" id="MobiDB-lite"/>
    </source>
</evidence>
<evidence type="ECO:0000305" key="3"/>
<feature type="chain" id="PRO_0000145424" description="DNA topoisomerase 4 subunit B">
    <location>
        <begin position="1"/>
        <end position="655"/>
    </location>
</feature>
<feature type="domain" description="Toprim" evidence="1">
    <location>
        <begin position="423"/>
        <end position="537"/>
    </location>
</feature>
<feature type="region of interest" description="Disordered" evidence="2">
    <location>
        <begin position="387"/>
        <end position="419"/>
    </location>
</feature>
<feature type="compositionally biased region" description="Basic and acidic residues" evidence="2">
    <location>
        <begin position="387"/>
        <end position="397"/>
    </location>
</feature>
<feature type="binding site" evidence="1">
    <location>
        <position position="9"/>
    </location>
    <ligand>
        <name>ATP</name>
        <dbReference type="ChEBI" id="CHEBI:30616"/>
    </ligand>
</feature>
<feature type="binding site" evidence="1">
    <location>
        <position position="49"/>
    </location>
    <ligand>
        <name>ATP</name>
        <dbReference type="ChEBI" id="CHEBI:30616"/>
    </ligand>
</feature>
<feature type="binding site" evidence="1">
    <location>
        <position position="76"/>
    </location>
    <ligand>
        <name>ATP</name>
        <dbReference type="ChEBI" id="CHEBI:30616"/>
    </ligand>
</feature>
<feature type="binding site" evidence="1">
    <location>
        <begin position="116"/>
        <end position="122"/>
    </location>
    <ligand>
        <name>ATP</name>
        <dbReference type="ChEBI" id="CHEBI:30616"/>
    </ligand>
</feature>
<feature type="binding site" evidence="1">
    <location>
        <position position="340"/>
    </location>
    <ligand>
        <name>ATP</name>
        <dbReference type="ChEBI" id="CHEBI:30616"/>
    </ligand>
</feature>
<feature type="binding site" evidence="1">
    <location>
        <position position="429"/>
    </location>
    <ligand>
        <name>Mg(2+)</name>
        <dbReference type="ChEBI" id="CHEBI:18420"/>
        <label>1</label>
        <note>catalytic</note>
    </ligand>
</feature>
<feature type="binding site" evidence="1">
    <location>
        <position position="502"/>
    </location>
    <ligand>
        <name>Mg(2+)</name>
        <dbReference type="ChEBI" id="CHEBI:18420"/>
        <label>1</label>
        <note>catalytic</note>
    </ligand>
</feature>
<feature type="binding site" evidence="1">
    <location>
        <position position="502"/>
    </location>
    <ligand>
        <name>Mg(2+)</name>
        <dbReference type="ChEBI" id="CHEBI:18420"/>
        <label>2</label>
    </ligand>
</feature>
<feature type="binding site" evidence="1">
    <location>
        <position position="504"/>
    </location>
    <ligand>
        <name>Mg(2+)</name>
        <dbReference type="ChEBI" id="CHEBI:18420"/>
        <label>2</label>
    </ligand>
</feature>
<feature type="site" description="Interaction with DNA" evidence="1">
    <location>
        <position position="454"/>
    </location>
</feature>
<feature type="site" description="Interaction with DNA" evidence="1">
    <location>
        <position position="457"/>
    </location>
</feature>
<feature type="site" description="Interaction with DNA" evidence="1">
    <location>
        <position position="509"/>
    </location>
</feature>
<feature type="site" description="Interaction with DNA" evidence="1">
    <location>
        <position position="625"/>
    </location>
</feature>
<protein>
    <recommendedName>
        <fullName evidence="1">DNA topoisomerase 4 subunit B</fullName>
        <ecNumber evidence="1">5.6.2.2</ecNumber>
    </recommendedName>
    <alternativeName>
        <fullName evidence="1">Topoisomerase IV subunit B</fullName>
    </alternativeName>
</protein>
<gene>
    <name evidence="1" type="primary">parE</name>
    <name type="synonym">grlB</name>
    <name type="ordered locus">BSU18090</name>
</gene>
<organism>
    <name type="scientific">Bacillus subtilis (strain 168)</name>
    <dbReference type="NCBI Taxonomy" id="224308"/>
    <lineage>
        <taxon>Bacteria</taxon>
        <taxon>Bacillati</taxon>
        <taxon>Bacillota</taxon>
        <taxon>Bacilli</taxon>
        <taxon>Bacillales</taxon>
        <taxon>Bacillaceae</taxon>
        <taxon>Bacillus</taxon>
    </lineage>
</organism>
<dbReference type="EC" id="5.6.2.2" evidence="1"/>
<dbReference type="EMBL" id="Z73234">
    <property type="protein sequence ID" value="CAA97606.1"/>
    <property type="status" value="ALT_INIT"/>
    <property type="molecule type" value="Genomic_DNA"/>
</dbReference>
<dbReference type="EMBL" id="AF024713">
    <property type="protein sequence ID" value="AAB81614.1"/>
    <property type="molecule type" value="Genomic_DNA"/>
</dbReference>
<dbReference type="EMBL" id="AL009126">
    <property type="protein sequence ID" value="CAB13692.2"/>
    <property type="molecule type" value="Genomic_DNA"/>
</dbReference>
<dbReference type="PIR" id="C69637">
    <property type="entry name" value="C69637"/>
</dbReference>
<dbReference type="RefSeq" id="NP_389691.2">
    <property type="nucleotide sequence ID" value="NC_000964.3"/>
</dbReference>
<dbReference type="RefSeq" id="WP_003231552.1">
    <property type="nucleotide sequence ID" value="NZ_OZ025638.1"/>
</dbReference>
<dbReference type="SMR" id="Q59192"/>
<dbReference type="FunCoup" id="Q59192">
    <property type="interactions" value="86"/>
</dbReference>
<dbReference type="STRING" id="224308.BSU18090"/>
<dbReference type="BindingDB" id="Q59192"/>
<dbReference type="DrugBank" id="DB00537">
    <property type="generic name" value="Ciprofloxacin"/>
</dbReference>
<dbReference type="PaxDb" id="224308-BSU18090"/>
<dbReference type="EnsemblBacteria" id="CAB13692">
    <property type="protein sequence ID" value="CAB13692"/>
    <property type="gene ID" value="BSU_18090"/>
</dbReference>
<dbReference type="GeneID" id="936151"/>
<dbReference type="KEGG" id="bsu:BSU18090"/>
<dbReference type="PATRIC" id="fig|224308.179.peg.1971"/>
<dbReference type="eggNOG" id="COG0187">
    <property type="taxonomic scope" value="Bacteria"/>
</dbReference>
<dbReference type="InParanoid" id="Q59192"/>
<dbReference type="OrthoDB" id="9802808at2"/>
<dbReference type="PhylomeDB" id="Q59192"/>
<dbReference type="BioCyc" id="BSUB:BSU18090-MONOMER"/>
<dbReference type="Proteomes" id="UP000001570">
    <property type="component" value="Chromosome"/>
</dbReference>
<dbReference type="GO" id="GO:0005694">
    <property type="term" value="C:chromosome"/>
    <property type="evidence" value="ECO:0007669"/>
    <property type="project" value="InterPro"/>
</dbReference>
<dbReference type="GO" id="GO:0005524">
    <property type="term" value="F:ATP binding"/>
    <property type="evidence" value="ECO:0007669"/>
    <property type="project" value="UniProtKB-UniRule"/>
</dbReference>
<dbReference type="GO" id="GO:0003677">
    <property type="term" value="F:DNA binding"/>
    <property type="evidence" value="ECO:0007669"/>
    <property type="project" value="UniProtKB-UniRule"/>
</dbReference>
<dbReference type="GO" id="GO:0034335">
    <property type="term" value="F:DNA negative supercoiling activity"/>
    <property type="evidence" value="ECO:0007669"/>
    <property type="project" value="UniProtKB-ARBA"/>
</dbReference>
<dbReference type="GO" id="GO:0046872">
    <property type="term" value="F:metal ion binding"/>
    <property type="evidence" value="ECO:0007669"/>
    <property type="project" value="UniProtKB-KW"/>
</dbReference>
<dbReference type="GO" id="GO:0007059">
    <property type="term" value="P:chromosome segregation"/>
    <property type="evidence" value="ECO:0007669"/>
    <property type="project" value="UniProtKB-UniRule"/>
</dbReference>
<dbReference type="GO" id="GO:0006265">
    <property type="term" value="P:DNA topological change"/>
    <property type="evidence" value="ECO:0007669"/>
    <property type="project" value="UniProtKB-UniRule"/>
</dbReference>
<dbReference type="CDD" id="cd16928">
    <property type="entry name" value="HATPase_GyrB-like"/>
    <property type="match status" value="1"/>
</dbReference>
<dbReference type="CDD" id="cd00822">
    <property type="entry name" value="TopoII_Trans_DNA_gyrase"/>
    <property type="match status" value="1"/>
</dbReference>
<dbReference type="FunFam" id="3.30.230.10:FF:000005">
    <property type="entry name" value="DNA gyrase subunit B"/>
    <property type="match status" value="1"/>
</dbReference>
<dbReference type="FunFam" id="3.30.565.10:FF:000002">
    <property type="entry name" value="DNA gyrase subunit B"/>
    <property type="match status" value="1"/>
</dbReference>
<dbReference type="FunFam" id="3.40.50.670:FF:000002">
    <property type="entry name" value="DNA gyrase subunit B"/>
    <property type="match status" value="1"/>
</dbReference>
<dbReference type="Gene3D" id="3.30.230.10">
    <property type="match status" value="1"/>
</dbReference>
<dbReference type="Gene3D" id="3.40.50.670">
    <property type="match status" value="1"/>
</dbReference>
<dbReference type="Gene3D" id="3.30.565.10">
    <property type="entry name" value="Histidine kinase-like ATPase, C-terminal domain"/>
    <property type="match status" value="1"/>
</dbReference>
<dbReference type="HAMAP" id="MF_00939">
    <property type="entry name" value="ParE_type2"/>
    <property type="match status" value="1"/>
</dbReference>
<dbReference type="InterPro" id="IPR002288">
    <property type="entry name" value="DNA_gyrase_B_C"/>
</dbReference>
<dbReference type="InterPro" id="IPR036890">
    <property type="entry name" value="HATPase_C_sf"/>
</dbReference>
<dbReference type="InterPro" id="IPR005740">
    <property type="entry name" value="ParE_type2"/>
</dbReference>
<dbReference type="InterPro" id="IPR020568">
    <property type="entry name" value="Ribosomal_Su5_D2-typ_SF"/>
</dbReference>
<dbReference type="InterPro" id="IPR014721">
    <property type="entry name" value="Ribsml_uS5_D2-typ_fold_subgr"/>
</dbReference>
<dbReference type="InterPro" id="IPR001241">
    <property type="entry name" value="Topo_IIA"/>
</dbReference>
<dbReference type="InterPro" id="IPR013760">
    <property type="entry name" value="Topo_IIA-like_dom_sf"/>
</dbReference>
<dbReference type="InterPro" id="IPR000565">
    <property type="entry name" value="Topo_IIA_B"/>
</dbReference>
<dbReference type="InterPro" id="IPR013759">
    <property type="entry name" value="Topo_IIA_B_C"/>
</dbReference>
<dbReference type="InterPro" id="IPR013506">
    <property type="entry name" value="Topo_IIA_bsu_dom2"/>
</dbReference>
<dbReference type="InterPro" id="IPR018522">
    <property type="entry name" value="TopoIIA_CS"/>
</dbReference>
<dbReference type="InterPro" id="IPR006171">
    <property type="entry name" value="TOPRIM_dom"/>
</dbReference>
<dbReference type="NCBIfam" id="TIGR01058">
    <property type="entry name" value="parE_Gpos"/>
    <property type="match status" value="1"/>
</dbReference>
<dbReference type="NCBIfam" id="NF004189">
    <property type="entry name" value="PRK05644.1"/>
    <property type="match status" value="1"/>
</dbReference>
<dbReference type="PANTHER" id="PTHR45866">
    <property type="entry name" value="DNA GYRASE/TOPOISOMERASE SUBUNIT B"/>
    <property type="match status" value="1"/>
</dbReference>
<dbReference type="PANTHER" id="PTHR45866:SF12">
    <property type="entry name" value="DNA TOPOISOMERASE 4 SUBUNIT B"/>
    <property type="match status" value="1"/>
</dbReference>
<dbReference type="Pfam" id="PF00204">
    <property type="entry name" value="DNA_gyraseB"/>
    <property type="match status" value="1"/>
</dbReference>
<dbReference type="Pfam" id="PF00986">
    <property type="entry name" value="DNA_gyraseB_C"/>
    <property type="match status" value="1"/>
</dbReference>
<dbReference type="Pfam" id="PF02518">
    <property type="entry name" value="HATPase_c"/>
    <property type="match status" value="1"/>
</dbReference>
<dbReference type="Pfam" id="PF01751">
    <property type="entry name" value="Toprim"/>
    <property type="match status" value="1"/>
</dbReference>
<dbReference type="PRINTS" id="PR01159">
    <property type="entry name" value="DNAGYRASEB"/>
</dbReference>
<dbReference type="PRINTS" id="PR00418">
    <property type="entry name" value="TPI2FAMILY"/>
</dbReference>
<dbReference type="SMART" id="SM00387">
    <property type="entry name" value="HATPase_c"/>
    <property type="match status" value="1"/>
</dbReference>
<dbReference type="SMART" id="SM00433">
    <property type="entry name" value="TOP2c"/>
    <property type="match status" value="1"/>
</dbReference>
<dbReference type="SUPFAM" id="SSF55874">
    <property type="entry name" value="ATPase domain of HSP90 chaperone/DNA topoisomerase II/histidine kinase"/>
    <property type="match status" value="1"/>
</dbReference>
<dbReference type="SUPFAM" id="SSF54211">
    <property type="entry name" value="Ribosomal protein S5 domain 2-like"/>
    <property type="match status" value="1"/>
</dbReference>
<dbReference type="SUPFAM" id="SSF56719">
    <property type="entry name" value="Type II DNA topoisomerase"/>
    <property type="match status" value="1"/>
</dbReference>
<dbReference type="PROSITE" id="PS00177">
    <property type="entry name" value="TOPOISOMERASE_II"/>
    <property type="match status" value="1"/>
</dbReference>
<dbReference type="PROSITE" id="PS50880">
    <property type="entry name" value="TOPRIM"/>
    <property type="match status" value="1"/>
</dbReference>
<reference key="1">
    <citation type="journal article" date="1996" name="Microbiology">
        <title>New genes in the 170 degrees region of the Bacillus subtilis genome encode DNA gyrase subunits, a thioredoxin, a xylanase and an amino acid transporter.</title>
        <authorList>
            <person name="Rose M."/>
            <person name="Entian K.-D."/>
        </authorList>
    </citation>
    <scope>NUCLEOTIDE SEQUENCE [GENOMIC DNA]</scope>
    <source>
        <strain>168</strain>
    </source>
</reference>
<reference key="2">
    <citation type="journal article" date="1998" name="Proc. Natl. Acad. Sci. U.S.A.">
        <title>Bipolar localization of Bacillus subtilis topoisomerase IV, an enzyme required for chromosome segregation.</title>
        <authorList>
            <person name="Huang W.M."/>
            <person name="Libbey J.L."/>
            <person name="van de Hoeven P."/>
            <person name="Yu S.X."/>
        </authorList>
    </citation>
    <scope>NUCLEOTIDE SEQUENCE [GENOMIC DNA]</scope>
    <source>
        <strain>168 / CB10</strain>
    </source>
</reference>
<reference key="3">
    <citation type="journal article" date="1997" name="Nature">
        <title>The complete genome sequence of the Gram-positive bacterium Bacillus subtilis.</title>
        <authorList>
            <person name="Kunst F."/>
            <person name="Ogasawara N."/>
            <person name="Moszer I."/>
            <person name="Albertini A.M."/>
            <person name="Alloni G."/>
            <person name="Azevedo V."/>
            <person name="Bertero M.G."/>
            <person name="Bessieres P."/>
            <person name="Bolotin A."/>
            <person name="Borchert S."/>
            <person name="Borriss R."/>
            <person name="Boursier L."/>
            <person name="Brans A."/>
            <person name="Braun M."/>
            <person name="Brignell S.C."/>
            <person name="Bron S."/>
            <person name="Brouillet S."/>
            <person name="Bruschi C.V."/>
            <person name="Caldwell B."/>
            <person name="Capuano V."/>
            <person name="Carter N.M."/>
            <person name="Choi S.-K."/>
            <person name="Codani J.-J."/>
            <person name="Connerton I.F."/>
            <person name="Cummings N.J."/>
            <person name="Daniel R.A."/>
            <person name="Denizot F."/>
            <person name="Devine K.M."/>
            <person name="Duesterhoeft A."/>
            <person name="Ehrlich S.D."/>
            <person name="Emmerson P.T."/>
            <person name="Entian K.-D."/>
            <person name="Errington J."/>
            <person name="Fabret C."/>
            <person name="Ferrari E."/>
            <person name="Foulger D."/>
            <person name="Fritz C."/>
            <person name="Fujita M."/>
            <person name="Fujita Y."/>
            <person name="Fuma S."/>
            <person name="Galizzi A."/>
            <person name="Galleron N."/>
            <person name="Ghim S.-Y."/>
            <person name="Glaser P."/>
            <person name="Goffeau A."/>
            <person name="Golightly E.J."/>
            <person name="Grandi G."/>
            <person name="Guiseppi G."/>
            <person name="Guy B.J."/>
            <person name="Haga K."/>
            <person name="Haiech J."/>
            <person name="Harwood C.R."/>
            <person name="Henaut A."/>
            <person name="Hilbert H."/>
            <person name="Holsappel S."/>
            <person name="Hosono S."/>
            <person name="Hullo M.-F."/>
            <person name="Itaya M."/>
            <person name="Jones L.-M."/>
            <person name="Joris B."/>
            <person name="Karamata D."/>
            <person name="Kasahara Y."/>
            <person name="Klaerr-Blanchard M."/>
            <person name="Klein C."/>
            <person name="Kobayashi Y."/>
            <person name="Koetter P."/>
            <person name="Koningstein G."/>
            <person name="Krogh S."/>
            <person name="Kumano M."/>
            <person name="Kurita K."/>
            <person name="Lapidus A."/>
            <person name="Lardinois S."/>
            <person name="Lauber J."/>
            <person name="Lazarevic V."/>
            <person name="Lee S.-M."/>
            <person name="Levine A."/>
            <person name="Liu H."/>
            <person name="Masuda S."/>
            <person name="Mauel C."/>
            <person name="Medigue C."/>
            <person name="Medina N."/>
            <person name="Mellado R.P."/>
            <person name="Mizuno M."/>
            <person name="Moestl D."/>
            <person name="Nakai S."/>
            <person name="Noback M."/>
            <person name="Noone D."/>
            <person name="O'Reilly M."/>
            <person name="Ogawa K."/>
            <person name="Ogiwara A."/>
            <person name="Oudega B."/>
            <person name="Park S.-H."/>
            <person name="Parro V."/>
            <person name="Pohl T.M."/>
            <person name="Portetelle D."/>
            <person name="Porwollik S."/>
            <person name="Prescott A.M."/>
            <person name="Presecan E."/>
            <person name="Pujic P."/>
            <person name="Purnelle B."/>
            <person name="Rapoport G."/>
            <person name="Rey M."/>
            <person name="Reynolds S."/>
            <person name="Rieger M."/>
            <person name="Rivolta C."/>
            <person name="Rocha E."/>
            <person name="Roche B."/>
            <person name="Rose M."/>
            <person name="Sadaie Y."/>
            <person name="Sato T."/>
            <person name="Scanlan E."/>
            <person name="Schleich S."/>
            <person name="Schroeter R."/>
            <person name="Scoffone F."/>
            <person name="Sekiguchi J."/>
            <person name="Sekowska A."/>
            <person name="Seror S.J."/>
            <person name="Serror P."/>
            <person name="Shin B.-S."/>
            <person name="Soldo B."/>
            <person name="Sorokin A."/>
            <person name="Tacconi E."/>
            <person name="Takagi T."/>
            <person name="Takahashi H."/>
            <person name="Takemaru K."/>
            <person name="Takeuchi M."/>
            <person name="Tamakoshi A."/>
            <person name="Tanaka T."/>
            <person name="Terpstra P."/>
            <person name="Tognoni A."/>
            <person name="Tosato V."/>
            <person name="Uchiyama S."/>
            <person name="Vandenbol M."/>
            <person name="Vannier F."/>
            <person name="Vassarotti A."/>
            <person name="Viari A."/>
            <person name="Wambutt R."/>
            <person name="Wedler E."/>
            <person name="Wedler H."/>
            <person name="Weitzenegger T."/>
            <person name="Winters P."/>
            <person name="Wipat A."/>
            <person name="Yamamoto H."/>
            <person name="Yamane K."/>
            <person name="Yasumoto K."/>
            <person name="Yata K."/>
            <person name="Yoshida K."/>
            <person name="Yoshikawa H.-F."/>
            <person name="Zumstein E."/>
            <person name="Yoshikawa H."/>
            <person name="Danchin A."/>
        </authorList>
    </citation>
    <scope>NUCLEOTIDE SEQUENCE [LARGE SCALE GENOMIC DNA]</scope>
    <source>
        <strain>168</strain>
    </source>
</reference>
<name>PARE_BACSU</name>
<comment type="function">
    <text evidence="1">Topoisomerase IV is essential for chromosome segregation. It relaxes supercoiled DNA. Performs the decatenation events required during the replication of a circular DNA molecule.</text>
</comment>
<comment type="catalytic activity">
    <reaction evidence="1">
        <text>ATP-dependent breakage, passage and rejoining of double-stranded DNA.</text>
        <dbReference type="EC" id="5.6.2.2"/>
    </reaction>
</comment>
<comment type="cofactor">
    <cofactor evidence="1">
        <name>Mg(2+)</name>
        <dbReference type="ChEBI" id="CHEBI:18420"/>
    </cofactor>
    <cofactor evidence="1">
        <name>Mn(2+)</name>
        <dbReference type="ChEBI" id="CHEBI:29035"/>
    </cofactor>
    <cofactor evidence="1">
        <name>Ca(2+)</name>
        <dbReference type="ChEBI" id="CHEBI:29108"/>
    </cofactor>
    <text evidence="1">Binds two Mg(2+) per subunit. The magnesium ions form salt bridges with both the protein and the DNA. Can also accept other divalent metal cations, such as Mn(2+) or Ca(2+).</text>
</comment>
<comment type="subunit">
    <text evidence="1">Heterotetramer composed of ParC and ParE.</text>
</comment>
<comment type="similarity">
    <text evidence="1">Belongs to the type II topoisomerase family. ParE type 2 subfamily.</text>
</comment>
<comment type="sequence caution" evidence="3">
    <conflict type="erroneous initiation">
        <sequence resource="EMBL-CDS" id="CAA97606"/>
    </conflict>
</comment>